<feature type="chain" id="PRO_0000360680" description="Uncharacterized HTH-type transcriptional regulator YobV">
    <location>
        <begin position="1"/>
        <end position="313"/>
    </location>
</feature>
<feature type="domain" description="HTH deoR-type" evidence="1">
    <location>
        <begin position="2"/>
        <end position="57"/>
    </location>
</feature>
<feature type="domain" description="WYL" evidence="2">
    <location>
        <begin position="131"/>
        <end position="210"/>
    </location>
</feature>
<feature type="DNA-binding region" description="H-T-H motif" evidence="1">
    <location>
        <begin position="19"/>
        <end position="38"/>
    </location>
</feature>
<comment type="subcellular location">
    <subcellularLocation>
        <location evidence="3">Cytoplasm</location>
    </subcellularLocation>
</comment>
<gene>
    <name type="primary">yobV</name>
    <name type="ordered locus">BSU19100</name>
</gene>
<sequence length="313" mass="36536">MKLERLLAMVVLLISKKQVQAAELAELFEVSVRTIYRDIETINRAGIPIVTSQGSGGGIGIMETYRLEREWLKEEELFAIASALQSVSSMYEPVSHSTAYQKIKHLIPEQSTQAFKHQTEKWFIDMTAWGHTEDQKTLREKISAAIDRLLTISFTYTSASGETLLRETEPYTLVCKAGHWYLYAYCLVRNDFRFFKLNRMKDLAILHQTFIRKDIQLDTLPWDKSWYQKDRLTELVILVQPSARQRIGEWFGYDVLHCCEEDEICQAVISLPEDQWLIGFLLQFGKDIEVLQPLHIRDKVKETIHHMQKIYET</sequence>
<dbReference type="EMBL" id="AF027868">
    <property type="protein sequence ID" value="AAB84472.1"/>
    <property type="molecule type" value="Genomic_DNA"/>
</dbReference>
<dbReference type="EMBL" id="AL009126">
    <property type="protein sequence ID" value="CAB13802.1"/>
    <property type="molecule type" value="Genomic_DNA"/>
</dbReference>
<dbReference type="PIR" id="D69900">
    <property type="entry name" value="D69900"/>
</dbReference>
<dbReference type="RefSeq" id="NP_389791.1">
    <property type="nucleotide sequence ID" value="NC_000964.3"/>
</dbReference>
<dbReference type="RefSeq" id="WP_003231290.1">
    <property type="nucleotide sequence ID" value="NZ_OZ025638.1"/>
</dbReference>
<dbReference type="SMR" id="O34920"/>
<dbReference type="FunCoup" id="O34920">
    <property type="interactions" value="250"/>
</dbReference>
<dbReference type="STRING" id="224308.BSU19100"/>
<dbReference type="PaxDb" id="224308-BSU19100"/>
<dbReference type="DNASU" id="939644"/>
<dbReference type="EnsemblBacteria" id="CAB13802">
    <property type="protein sequence ID" value="CAB13802"/>
    <property type="gene ID" value="BSU_19100"/>
</dbReference>
<dbReference type="GeneID" id="939644"/>
<dbReference type="KEGG" id="bsu:BSU19100"/>
<dbReference type="PATRIC" id="fig|224308.179.peg.2088"/>
<dbReference type="eggNOG" id="COG2378">
    <property type="taxonomic scope" value="Bacteria"/>
</dbReference>
<dbReference type="InParanoid" id="O34920"/>
<dbReference type="OrthoDB" id="9815009at2"/>
<dbReference type="PhylomeDB" id="O34920"/>
<dbReference type="BioCyc" id="BSUB:BSU19100-MONOMER"/>
<dbReference type="Proteomes" id="UP000001570">
    <property type="component" value="Chromosome"/>
</dbReference>
<dbReference type="GO" id="GO:0005737">
    <property type="term" value="C:cytoplasm"/>
    <property type="evidence" value="ECO:0007669"/>
    <property type="project" value="UniProtKB-SubCell"/>
</dbReference>
<dbReference type="GO" id="GO:0003677">
    <property type="term" value="F:DNA binding"/>
    <property type="evidence" value="ECO:0007669"/>
    <property type="project" value="UniProtKB-KW"/>
</dbReference>
<dbReference type="GO" id="GO:0003700">
    <property type="term" value="F:DNA-binding transcription factor activity"/>
    <property type="evidence" value="ECO:0007669"/>
    <property type="project" value="InterPro"/>
</dbReference>
<dbReference type="Gene3D" id="1.10.10.10">
    <property type="entry name" value="Winged helix-like DNA-binding domain superfamily/Winged helix DNA-binding domain"/>
    <property type="match status" value="1"/>
</dbReference>
<dbReference type="InterPro" id="IPR051534">
    <property type="entry name" value="CBASS_pafABC_assoc_protein"/>
</dbReference>
<dbReference type="InterPro" id="IPR001034">
    <property type="entry name" value="DeoR_HTH"/>
</dbReference>
<dbReference type="InterPro" id="IPR013196">
    <property type="entry name" value="HTH_11"/>
</dbReference>
<dbReference type="InterPro" id="IPR028349">
    <property type="entry name" value="PafC"/>
</dbReference>
<dbReference type="InterPro" id="IPR036388">
    <property type="entry name" value="WH-like_DNA-bd_sf"/>
</dbReference>
<dbReference type="InterPro" id="IPR036390">
    <property type="entry name" value="WH_DNA-bd_sf"/>
</dbReference>
<dbReference type="InterPro" id="IPR026881">
    <property type="entry name" value="WYL_dom"/>
</dbReference>
<dbReference type="PANTHER" id="PTHR34580">
    <property type="match status" value="1"/>
</dbReference>
<dbReference type="PANTHER" id="PTHR34580:SF8">
    <property type="entry name" value="WYL DOMAIN-CONTAINING PROTEIN"/>
    <property type="match status" value="1"/>
</dbReference>
<dbReference type="Pfam" id="PF08279">
    <property type="entry name" value="HTH_11"/>
    <property type="match status" value="1"/>
</dbReference>
<dbReference type="Pfam" id="PF13280">
    <property type="entry name" value="WYL"/>
    <property type="match status" value="1"/>
</dbReference>
<dbReference type="PIRSF" id="PIRSF016838">
    <property type="entry name" value="PafC"/>
    <property type="match status" value="1"/>
</dbReference>
<dbReference type="SUPFAM" id="SSF46785">
    <property type="entry name" value="Winged helix' DNA-binding domain"/>
    <property type="match status" value="1"/>
</dbReference>
<dbReference type="PROSITE" id="PS51000">
    <property type="entry name" value="HTH_DEOR_2"/>
    <property type="match status" value="1"/>
</dbReference>
<dbReference type="PROSITE" id="PS52050">
    <property type="entry name" value="WYL"/>
    <property type="match status" value="1"/>
</dbReference>
<organism>
    <name type="scientific">Bacillus subtilis (strain 168)</name>
    <dbReference type="NCBI Taxonomy" id="224308"/>
    <lineage>
        <taxon>Bacteria</taxon>
        <taxon>Bacillati</taxon>
        <taxon>Bacillota</taxon>
        <taxon>Bacilli</taxon>
        <taxon>Bacillales</taxon>
        <taxon>Bacillaceae</taxon>
        <taxon>Bacillus</taxon>
    </lineage>
</organism>
<proteinExistence type="predicted"/>
<name>YOBV_BACSU</name>
<protein>
    <recommendedName>
        <fullName>Uncharacterized HTH-type transcriptional regulator YobV</fullName>
    </recommendedName>
</protein>
<evidence type="ECO:0000255" key="1">
    <source>
        <dbReference type="PROSITE-ProRule" id="PRU00349"/>
    </source>
</evidence>
<evidence type="ECO:0000255" key="2">
    <source>
        <dbReference type="PROSITE-ProRule" id="PRU01395"/>
    </source>
</evidence>
<evidence type="ECO:0000305" key="3"/>
<keyword id="KW-0963">Cytoplasm</keyword>
<keyword id="KW-0238">DNA-binding</keyword>
<keyword id="KW-1185">Reference proteome</keyword>
<keyword id="KW-0678">Repressor</keyword>
<keyword id="KW-0804">Transcription</keyword>
<keyword id="KW-0805">Transcription regulation</keyword>
<accession>O34920</accession>
<accession>Q796D3</accession>
<reference key="1">
    <citation type="submission" date="1997-10" db="EMBL/GenBank/DDBJ databases">
        <title>Sequence analysis of the Bacillus subtilis chromosome region between the terC and odhAB loci cloned in a yeast artificial chromosome.</title>
        <authorList>
            <person name="Lapidus A."/>
            <person name="Galleron N."/>
            <person name="Sorokin A."/>
            <person name="Ehrlich S.D."/>
        </authorList>
    </citation>
    <scope>NUCLEOTIDE SEQUENCE [GENOMIC DNA]</scope>
</reference>
<reference key="2">
    <citation type="journal article" date="1997" name="Nature">
        <title>The complete genome sequence of the Gram-positive bacterium Bacillus subtilis.</title>
        <authorList>
            <person name="Kunst F."/>
            <person name="Ogasawara N."/>
            <person name="Moszer I."/>
            <person name="Albertini A.M."/>
            <person name="Alloni G."/>
            <person name="Azevedo V."/>
            <person name="Bertero M.G."/>
            <person name="Bessieres P."/>
            <person name="Bolotin A."/>
            <person name="Borchert S."/>
            <person name="Borriss R."/>
            <person name="Boursier L."/>
            <person name="Brans A."/>
            <person name="Braun M."/>
            <person name="Brignell S.C."/>
            <person name="Bron S."/>
            <person name="Brouillet S."/>
            <person name="Bruschi C.V."/>
            <person name="Caldwell B."/>
            <person name="Capuano V."/>
            <person name="Carter N.M."/>
            <person name="Choi S.-K."/>
            <person name="Codani J.-J."/>
            <person name="Connerton I.F."/>
            <person name="Cummings N.J."/>
            <person name="Daniel R.A."/>
            <person name="Denizot F."/>
            <person name="Devine K.M."/>
            <person name="Duesterhoeft A."/>
            <person name="Ehrlich S.D."/>
            <person name="Emmerson P.T."/>
            <person name="Entian K.-D."/>
            <person name="Errington J."/>
            <person name="Fabret C."/>
            <person name="Ferrari E."/>
            <person name="Foulger D."/>
            <person name="Fritz C."/>
            <person name="Fujita M."/>
            <person name="Fujita Y."/>
            <person name="Fuma S."/>
            <person name="Galizzi A."/>
            <person name="Galleron N."/>
            <person name="Ghim S.-Y."/>
            <person name="Glaser P."/>
            <person name="Goffeau A."/>
            <person name="Golightly E.J."/>
            <person name="Grandi G."/>
            <person name="Guiseppi G."/>
            <person name="Guy B.J."/>
            <person name="Haga K."/>
            <person name="Haiech J."/>
            <person name="Harwood C.R."/>
            <person name="Henaut A."/>
            <person name="Hilbert H."/>
            <person name="Holsappel S."/>
            <person name="Hosono S."/>
            <person name="Hullo M.-F."/>
            <person name="Itaya M."/>
            <person name="Jones L.-M."/>
            <person name="Joris B."/>
            <person name="Karamata D."/>
            <person name="Kasahara Y."/>
            <person name="Klaerr-Blanchard M."/>
            <person name="Klein C."/>
            <person name="Kobayashi Y."/>
            <person name="Koetter P."/>
            <person name="Koningstein G."/>
            <person name="Krogh S."/>
            <person name="Kumano M."/>
            <person name="Kurita K."/>
            <person name="Lapidus A."/>
            <person name="Lardinois S."/>
            <person name="Lauber J."/>
            <person name="Lazarevic V."/>
            <person name="Lee S.-M."/>
            <person name="Levine A."/>
            <person name="Liu H."/>
            <person name="Masuda S."/>
            <person name="Mauel C."/>
            <person name="Medigue C."/>
            <person name="Medina N."/>
            <person name="Mellado R.P."/>
            <person name="Mizuno M."/>
            <person name="Moestl D."/>
            <person name="Nakai S."/>
            <person name="Noback M."/>
            <person name="Noone D."/>
            <person name="O'Reilly M."/>
            <person name="Ogawa K."/>
            <person name="Ogiwara A."/>
            <person name="Oudega B."/>
            <person name="Park S.-H."/>
            <person name="Parro V."/>
            <person name="Pohl T.M."/>
            <person name="Portetelle D."/>
            <person name="Porwollik S."/>
            <person name="Prescott A.M."/>
            <person name="Presecan E."/>
            <person name="Pujic P."/>
            <person name="Purnelle B."/>
            <person name="Rapoport G."/>
            <person name="Rey M."/>
            <person name="Reynolds S."/>
            <person name="Rieger M."/>
            <person name="Rivolta C."/>
            <person name="Rocha E."/>
            <person name="Roche B."/>
            <person name="Rose M."/>
            <person name="Sadaie Y."/>
            <person name="Sato T."/>
            <person name="Scanlan E."/>
            <person name="Schleich S."/>
            <person name="Schroeter R."/>
            <person name="Scoffone F."/>
            <person name="Sekiguchi J."/>
            <person name="Sekowska A."/>
            <person name="Seror S.J."/>
            <person name="Serror P."/>
            <person name="Shin B.-S."/>
            <person name="Soldo B."/>
            <person name="Sorokin A."/>
            <person name="Tacconi E."/>
            <person name="Takagi T."/>
            <person name="Takahashi H."/>
            <person name="Takemaru K."/>
            <person name="Takeuchi M."/>
            <person name="Tamakoshi A."/>
            <person name="Tanaka T."/>
            <person name="Terpstra P."/>
            <person name="Tognoni A."/>
            <person name="Tosato V."/>
            <person name="Uchiyama S."/>
            <person name="Vandenbol M."/>
            <person name="Vannier F."/>
            <person name="Vassarotti A."/>
            <person name="Viari A."/>
            <person name="Wambutt R."/>
            <person name="Wedler E."/>
            <person name="Wedler H."/>
            <person name="Weitzenegger T."/>
            <person name="Winters P."/>
            <person name="Wipat A."/>
            <person name="Yamamoto H."/>
            <person name="Yamane K."/>
            <person name="Yasumoto K."/>
            <person name="Yata K."/>
            <person name="Yoshida K."/>
            <person name="Yoshikawa H.-F."/>
            <person name="Zumstein E."/>
            <person name="Yoshikawa H."/>
            <person name="Danchin A."/>
        </authorList>
    </citation>
    <scope>NUCLEOTIDE SEQUENCE [LARGE SCALE GENOMIC DNA]</scope>
    <source>
        <strain>168</strain>
    </source>
</reference>